<name>TRPD_LISMO</name>
<gene>
    <name evidence="1" type="primary">trpD</name>
    <name type="ordered locus">lmo1631</name>
</gene>
<keyword id="KW-0028">Amino-acid biosynthesis</keyword>
<keyword id="KW-0057">Aromatic amino acid biosynthesis</keyword>
<keyword id="KW-0328">Glycosyltransferase</keyword>
<keyword id="KW-0460">Magnesium</keyword>
<keyword id="KW-0479">Metal-binding</keyword>
<keyword id="KW-1185">Reference proteome</keyword>
<keyword id="KW-0808">Transferase</keyword>
<keyword id="KW-0822">Tryptophan biosynthesis</keyword>
<protein>
    <recommendedName>
        <fullName evidence="1">Anthranilate phosphoribosyltransferase</fullName>
        <ecNumber evidence="1">2.4.2.18</ecNumber>
    </recommendedName>
</protein>
<accession>Q8Y6Q3</accession>
<dbReference type="EC" id="2.4.2.18" evidence="1"/>
<dbReference type="EMBL" id="AL591980">
    <property type="protein sequence ID" value="CAC99709.1"/>
    <property type="molecule type" value="Genomic_DNA"/>
</dbReference>
<dbReference type="PIR" id="AG1278">
    <property type="entry name" value="AG1278"/>
</dbReference>
<dbReference type="RefSeq" id="NP_465156.1">
    <property type="nucleotide sequence ID" value="NC_003210.1"/>
</dbReference>
<dbReference type="RefSeq" id="WP_003723937.1">
    <property type="nucleotide sequence ID" value="NZ_CP149495.1"/>
</dbReference>
<dbReference type="SMR" id="Q8Y6Q3"/>
<dbReference type="STRING" id="169963.gene:17594288"/>
<dbReference type="PaxDb" id="169963-lmo1631"/>
<dbReference type="EnsemblBacteria" id="CAC99709">
    <property type="protein sequence ID" value="CAC99709"/>
    <property type="gene ID" value="CAC99709"/>
</dbReference>
<dbReference type="GeneID" id="985706"/>
<dbReference type="KEGG" id="lmo:lmo1631"/>
<dbReference type="PATRIC" id="fig|169963.11.peg.1674"/>
<dbReference type="eggNOG" id="COG0547">
    <property type="taxonomic scope" value="Bacteria"/>
</dbReference>
<dbReference type="HOGENOM" id="CLU_034315_2_1_9"/>
<dbReference type="OrthoDB" id="9806430at2"/>
<dbReference type="PhylomeDB" id="Q8Y6Q3"/>
<dbReference type="BioCyc" id="LMON169963:LMO1631-MONOMER"/>
<dbReference type="UniPathway" id="UPA00035">
    <property type="reaction ID" value="UER00041"/>
</dbReference>
<dbReference type="Proteomes" id="UP000000817">
    <property type="component" value="Chromosome"/>
</dbReference>
<dbReference type="GO" id="GO:0005829">
    <property type="term" value="C:cytosol"/>
    <property type="evidence" value="ECO:0000318"/>
    <property type="project" value="GO_Central"/>
</dbReference>
<dbReference type="GO" id="GO:0004048">
    <property type="term" value="F:anthranilate phosphoribosyltransferase activity"/>
    <property type="evidence" value="ECO:0007669"/>
    <property type="project" value="UniProtKB-UniRule"/>
</dbReference>
<dbReference type="GO" id="GO:0000287">
    <property type="term" value="F:magnesium ion binding"/>
    <property type="evidence" value="ECO:0007669"/>
    <property type="project" value="UniProtKB-UniRule"/>
</dbReference>
<dbReference type="GO" id="GO:0000162">
    <property type="term" value="P:L-tryptophan biosynthetic process"/>
    <property type="evidence" value="ECO:0000318"/>
    <property type="project" value="GO_Central"/>
</dbReference>
<dbReference type="FunFam" id="1.20.970.10:FF:000014">
    <property type="entry name" value="Anthranilate phosphoribosyltransferase"/>
    <property type="match status" value="1"/>
</dbReference>
<dbReference type="FunFam" id="3.40.1030.10:FF:000002">
    <property type="entry name" value="Anthranilate phosphoribosyltransferase"/>
    <property type="match status" value="1"/>
</dbReference>
<dbReference type="Gene3D" id="3.40.1030.10">
    <property type="entry name" value="Nucleoside phosphorylase/phosphoribosyltransferase catalytic domain"/>
    <property type="match status" value="1"/>
</dbReference>
<dbReference type="Gene3D" id="1.20.970.10">
    <property type="entry name" value="Transferase, Pyrimidine Nucleoside Phosphorylase, Chain C"/>
    <property type="match status" value="1"/>
</dbReference>
<dbReference type="HAMAP" id="MF_00211">
    <property type="entry name" value="TrpD"/>
    <property type="match status" value="1"/>
</dbReference>
<dbReference type="InterPro" id="IPR005940">
    <property type="entry name" value="Anthranilate_Pribosyl_Tfrase"/>
</dbReference>
<dbReference type="InterPro" id="IPR000312">
    <property type="entry name" value="Glycosyl_Trfase_fam3"/>
</dbReference>
<dbReference type="InterPro" id="IPR017459">
    <property type="entry name" value="Glycosyl_Trfase_fam3_N_dom"/>
</dbReference>
<dbReference type="InterPro" id="IPR036320">
    <property type="entry name" value="Glycosyl_Trfase_fam3_N_dom_sf"/>
</dbReference>
<dbReference type="InterPro" id="IPR035902">
    <property type="entry name" value="Nuc_phospho_transferase"/>
</dbReference>
<dbReference type="NCBIfam" id="TIGR01245">
    <property type="entry name" value="trpD"/>
    <property type="match status" value="1"/>
</dbReference>
<dbReference type="PANTHER" id="PTHR43285">
    <property type="entry name" value="ANTHRANILATE PHOSPHORIBOSYLTRANSFERASE"/>
    <property type="match status" value="1"/>
</dbReference>
<dbReference type="PANTHER" id="PTHR43285:SF2">
    <property type="entry name" value="ANTHRANILATE PHOSPHORIBOSYLTRANSFERASE"/>
    <property type="match status" value="1"/>
</dbReference>
<dbReference type="Pfam" id="PF02885">
    <property type="entry name" value="Glycos_trans_3N"/>
    <property type="match status" value="1"/>
</dbReference>
<dbReference type="Pfam" id="PF00591">
    <property type="entry name" value="Glycos_transf_3"/>
    <property type="match status" value="1"/>
</dbReference>
<dbReference type="SUPFAM" id="SSF52418">
    <property type="entry name" value="Nucleoside phosphorylase/phosphoribosyltransferase catalytic domain"/>
    <property type="match status" value="1"/>
</dbReference>
<dbReference type="SUPFAM" id="SSF47648">
    <property type="entry name" value="Nucleoside phosphorylase/phosphoribosyltransferase N-terminal domain"/>
    <property type="match status" value="1"/>
</dbReference>
<organism>
    <name type="scientific">Listeria monocytogenes serovar 1/2a (strain ATCC BAA-679 / EGD-e)</name>
    <dbReference type="NCBI Taxonomy" id="169963"/>
    <lineage>
        <taxon>Bacteria</taxon>
        <taxon>Bacillati</taxon>
        <taxon>Bacillota</taxon>
        <taxon>Bacilli</taxon>
        <taxon>Bacillales</taxon>
        <taxon>Listeriaceae</taxon>
        <taxon>Listeria</taxon>
    </lineage>
</organism>
<feature type="chain" id="PRO_0000154459" description="Anthranilate phosphoribosyltransferase">
    <location>
        <begin position="1"/>
        <end position="339"/>
    </location>
</feature>
<feature type="binding site" evidence="1">
    <location>
        <position position="79"/>
    </location>
    <ligand>
        <name>5-phospho-alpha-D-ribose 1-diphosphate</name>
        <dbReference type="ChEBI" id="CHEBI:58017"/>
    </ligand>
</feature>
<feature type="binding site" evidence="1">
    <location>
        <position position="79"/>
    </location>
    <ligand>
        <name>anthranilate</name>
        <dbReference type="ChEBI" id="CHEBI:16567"/>
        <label>1</label>
    </ligand>
</feature>
<feature type="binding site" evidence="1">
    <location>
        <begin position="82"/>
        <end position="83"/>
    </location>
    <ligand>
        <name>5-phospho-alpha-D-ribose 1-diphosphate</name>
        <dbReference type="ChEBI" id="CHEBI:58017"/>
    </ligand>
</feature>
<feature type="binding site" evidence="1">
    <location>
        <position position="87"/>
    </location>
    <ligand>
        <name>5-phospho-alpha-D-ribose 1-diphosphate</name>
        <dbReference type="ChEBI" id="CHEBI:58017"/>
    </ligand>
</feature>
<feature type="binding site" evidence="1">
    <location>
        <begin position="89"/>
        <end position="92"/>
    </location>
    <ligand>
        <name>5-phospho-alpha-D-ribose 1-diphosphate</name>
        <dbReference type="ChEBI" id="CHEBI:58017"/>
    </ligand>
</feature>
<feature type="binding site" evidence="1">
    <location>
        <position position="91"/>
    </location>
    <ligand>
        <name>Mg(2+)</name>
        <dbReference type="ChEBI" id="CHEBI:18420"/>
        <label>1</label>
    </ligand>
</feature>
<feature type="binding site" evidence="1">
    <location>
        <begin position="107"/>
        <end position="115"/>
    </location>
    <ligand>
        <name>5-phospho-alpha-D-ribose 1-diphosphate</name>
        <dbReference type="ChEBI" id="CHEBI:58017"/>
    </ligand>
</feature>
<feature type="binding site" evidence="1">
    <location>
        <position position="110"/>
    </location>
    <ligand>
        <name>anthranilate</name>
        <dbReference type="ChEBI" id="CHEBI:16567"/>
        <label>1</label>
    </ligand>
</feature>
<feature type="binding site" evidence="1">
    <location>
        <position position="119"/>
    </location>
    <ligand>
        <name>5-phospho-alpha-D-ribose 1-diphosphate</name>
        <dbReference type="ChEBI" id="CHEBI:58017"/>
    </ligand>
</feature>
<feature type="binding site" evidence="1">
    <location>
        <position position="165"/>
    </location>
    <ligand>
        <name>anthranilate</name>
        <dbReference type="ChEBI" id="CHEBI:16567"/>
        <label>2</label>
    </ligand>
</feature>
<feature type="binding site" evidence="1">
    <location>
        <position position="224"/>
    </location>
    <ligand>
        <name>Mg(2+)</name>
        <dbReference type="ChEBI" id="CHEBI:18420"/>
        <label>2</label>
    </ligand>
</feature>
<feature type="binding site" evidence="1">
    <location>
        <position position="225"/>
    </location>
    <ligand>
        <name>Mg(2+)</name>
        <dbReference type="ChEBI" id="CHEBI:18420"/>
        <label>1</label>
    </ligand>
</feature>
<feature type="binding site" evidence="1">
    <location>
        <position position="225"/>
    </location>
    <ligand>
        <name>Mg(2+)</name>
        <dbReference type="ChEBI" id="CHEBI:18420"/>
        <label>2</label>
    </ligand>
</feature>
<evidence type="ECO:0000255" key="1">
    <source>
        <dbReference type="HAMAP-Rule" id="MF_00211"/>
    </source>
</evidence>
<comment type="function">
    <text evidence="1">Catalyzes the transfer of the phosphoribosyl group of 5-phosphorylribose-1-pyrophosphate (PRPP) to anthranilate to yield N-(5'-phosphoribosyl)-anthranilate (PRA).</text>
</comment>
<comment type="catalytic activity">
    <reaction evidence="1">
        <text>N-(5-phospho-beta-D-ribosyl)anthranilate + diphosphate = 5-phospho-alpha-D-ribose 1-diphosphate + anthranilate</text>
        <dbReference type="Rhea" id="RHEA:11768"/>
        <dbReference type="ChEBI" id="CHEBI:16567"/>
        <dbReference type="ChEBI" id="CHEBI:18277"/>
        <dbReference type="ChEBI" id="CHEBI:33019"/>
        <dbReference type="ChEBI" id="CHEBI:58017"/>
        <dbReference type="EC" id="2.4.2.18"/>
    </reaction>
</comment>
<comment type="cofactor">
    <cofactor evidence="1">
        <name>Mg(2+)</name>
        <dbReference type="ChEBI" id="CHEBI:18420"/>
    </cofactor>
    <text evidence="1">Binds 2 magnesium ions per monomer.</text>
</comment>
<comment type="pathway">
    <text evidence="1">Amino-acid biosynthesis; L-tryptophan biosynthesis; L-tryptophan from chorismate: step 2/5.</text>
</comment>
<comment type="subunit">
    <text evidence="1">Homodimer.</text>
</comment>
<comment type="similarity">
    <text evidence="1">Belongs to the anthranilate phosphoribosyltransferase family.</text>
</comment>
<sequence length="339" mass="36596">MEILLQKVYDQENLSKEEMNIIATEIFEGRLSKTKMAAFLMALKVKGETAEEMAGIAQAMQQVAIQVAFPAGTAMDNCGTGGDKSNSFNISTTSAFVLAAAGIPVAKHGNRSISSRSGSADVCQELGIDINLRPEDMTYLLEKVGIAFLFAPHVHPNMKYVMDVRKELGTPTIFNLIGPLTNPVHLETQLMGIYRRDLLEQTAEVLGQLGRKRAVVLNGAGFMDEASLAGENHYALYENGEVHLYTLRPEDVGLTSYPLEAITGGDAKENAAILRSVLEGEPGAYLDTVLLNAGFGLFANGKVETVQEGVDLAKDLISSGLAKQKLADLITYQKEVLAK</sequence>
<reference key="1">
    <citation type="journal article" date="2001" name="Science">
        <title>Comparative genomics of Listeria species.</title>
        <authorList>
            <person name="Glaser P."/>
            <person name="Frangeul L."/>
            <person name="Buchrieser C."/>
            <person name="Rusniok C."/>
            <person name="Amend A."/>
            <person name="Baquero F."/>
            <person name="Berche P."/>
            <person name="Bloecker H."/>
            <person name="Brandt P."/>
            <person name="Chakraborty T."/>
            <person name="Charbit A."/>
            <person name="Chetouani F."/>
            <person name="Couve E."/>
            <person name="de Daruvar A."/>
            <person name="Dehoux P."/>
            <person name="Domann E."/>
            <person name="Dominguez-Bernal G."/>
            <person name="Duchaud E."/>
            <person name="Durant L."/>
            <person name="Dussurget O."/>
            <person name="Entian K.-D."/>
            <person name="Fsihi H."/>
            <person name="Garcia-del Portillo F."/>
            <person name="Garrido P."/>
            <person name="Gautier L."/>
            <person name="Goebel W."/>
            <person name="Gomez-Lopez N."/>
            <person name="Hain T."/>
            <person name="Hauf J."/>
            <person name="Jackson D."/>
            <person name="Jones L.-M."/>
            <person name="Kaerst U."/>
            <person name="Kreft J."/>
            <person name="Kuhn M."/>
            <person name="Kunst F."/>
            <person name="Kurapkat G."/>
            <person name="Madueno E."/>
            <person name="Maitournam A."/>
            <person name="Mata Vicente J."/>
            <person name="Ng E."/>
            <person name="Nedjari H."/>
            <person name="Nordsiek G."/>
            <person name="Novella S."/>
            <person name="de Pablos B."/>
            <person name="Perez-Diaz J.-C."/>
            <person name="Purcell R."/>
            <person name="Remmel B."/>
            <person name="Rose M."/>
            <person name="Schlueter T."/>
            <person name="Simoes N."/>
            <person name="Tierrez A."/>
            <person name="Vazquez-Boland J.-A."/>
            <person name="Voss H."/>
            <person name="Wehland J."/>
            <person name="Cossart P."/>
        </authorList>
    </citation>
    <scope>NUCLEOTIDE SEQUENCE [LARGE SCALE GENOMIC DNA]</scope>
    <source>
        <strain>ATCC BAA-679 / EGD-e</strain>
    </source>
</reference>
<proteinExistence type="inferred from homology"/>